<proteinExistence type="inferred from homology"/>
<dbReference type="EC" id="6.5.1.2" evidence="1"/>
<dbReference type="EMBL" id="CP000699">
    <property type="protein sequence ID" value="ABQ71064.1"/>
    <property type="molecule type" value="Genomic_DNA"/>
</dbReference>
<dbReference type="SMR" id="A5VFJ8"/>
<dbReference type="STRING" id="392499.Swit_4727"/>
<dbReference type="PaxDb" id="392499-Swit_4727"/>
<dbReference type="KEGG" id="swi:Swit_4727"/>
<dbReference type="eggNOG" id="COG0272">
    <property type="taxonomic scope" value="Bacteria"/>
</dbReference>
<dbReference type="HOGENOM" id="CLU_007764_2_1_5"/>
<dbReference type="OrthoDB" id="9759736at2"/>
<dbReference type="Proteomes" id="UP000001989">
    <property type="component" value="Chromosome"/>
</dbReference>
<dbReference type="GO" id="GO:0005829">
    <property type="term" value="C:cytosol"/>
    <property type="evidence" value="ECO:0007669"/>
    <property type="project" value="TreeGrafter"/>
</dbReference>
<dbReference type="GO" id="GO:0003911">
    <property type="term" value="F:DNA ligase (NAD+) activity"/>
    <property type="evidence" value="ECO:0007669"/>
    <property type="project" value="UniProtKB-UniRule"/>
</dbReference>
<dbReference type="GO" id="GO:0046872">
    <property type="term" value="F:metal ion binding"/>
    <property type="evidence" value="ECO:0007669"/>
    <property type="project" value="UniProtKB-KW"/>
</dbReference>
<dbReference type="GO" id="GO:0006281">
    <property type="term" value="P:DNA repair"/>
    <property type="evidence" value="ECO:0007669"/>
    <property type="project" value="UniProtKB-KW"/>
</dbReference>
<dbReference type="GO" id="GO:0006260">
    <property type="term" value="P:DNA replication"/>
    <property type="evidence" value="ECO:0007669"/>
    <property type="project" value="UniProtKB-KW"/>
</dbReference>
<dbReference type="CDD" id="cd17748">
    <property type="entry name" value="BRCT_DNA_ligase_like"/>
    <property type="match status" value="1"/>
</dbReference>
<dbReference type="CDD" id="cd00114">
    <property type="entry name" value="LIGANc"/>
    <property type="match status" value="1"/>
</dbReference>
<dbReference type="FunFam" id="1.10.150.20:FF:000007">
    <property type="entry name" value="DNA ligase"/>
    <property type="match status" value="1"/>
</dbReference>
<dbReference type="FunFam" id="2.40.50.140:FF:000012">
    <property type="entry name" value="DNA ligase"/>
    <property type="match status" value="1"/>
</dbReference>
<dbReference type="FunFam" id="3.30.470.30:FF:000001">
    <property type="entry name" value="DNA ligase"/>
    <property type="match status" value="1"/>
</dbReference>
<dbReference type="Gene3D" id="6.20.10.30">
    <property type="match status" value="1"/>
</dbReference>
<dbReference type="Gene3D" id="1.10.150.20">
    <property type="entry name" value="5' to 3' exonuclease, C-terminal subdomain"/>
    <property type="match status" value="2"/>
</dbReference>
<dbReference type="Gene3D" id="3.40.50.10190">
    <property type="entry name" value="BRCT domain"/>
    <property type="match status" value="1"/>
</dbReference>
<dbReference type="Gene3D" id="3.30.470.30">
    <property type="entry name" value="DNA ligase/mRNA capping enzyme"/>
    <property type="match status" value="1"/>
</dbReference>
<dbReference type="Gene3D" id="1.10.287.610">
    <property type="entry name" value="Helix hairpin bin"/>
    <property type="match status" value="1"/>
</dbReference>
<dbReference type="Gene3D" id="2.40.50.140">
    <property type="entry name" value="Nucleic acid-binding proteins"/>
    <property type="match status" value="1"/>
</dbReference>
<dbReference type="HAMAP" id="MF_01588">
    <property type="entry name" value="DNA_ligase_A"/>
    <property type="match status" value="1"/>
</dbReference>
<dbReference type="InterPro" id="IPR001357">
    <property type="entry name" value="BRCT_dom"/>
</dbReference>
<dbReference type="InterPro" id="IPR036420">
    <property type="entry name" value="BRCT_dom_sf"/>
</dbReference>
<dbReference type="InterPro" id="IPR041663">
    <property type="entry name" value="DisA/LigA_HHH"/>
</dbReference>
<dbReference type="InterPro" id="IPR001679">
    <property type="entry name" value="DNA_ligase"/>
</dbReference>
<dbReference type="InterPro" id="IPR018239">
    <property type="entry name" value="DNA_ligase_AS"/>
</dbReference>
<dbReference type="InterPro" id="IPR033136">
    <property type="entry name" value="DNA_ligase_CS"/>
</dbReference>
<dbReference type="InterPro" id="IPR013839">
    <property type="entry name" value="DNAligase_adenylation"/>
</dbReference>
<dbReference type="InterPro" id="IPR013840">
    <property type="entry name" value="DNAligase_N"/>
</dbReference>
<dbReference type="InterPro" id="IPR012340">
    <property type="entry name" value="NA-bd_OB-fold"/>
</dbReference>
<dbReference type="InterPro" id="IPR004150">
    <property type="entry name" value="NAD_DNA_ligase_OB"/>
</dbReference>
<dbReference type="InterPro" id="IPR010994">
    <property type="entry name" value="RuvA_2-like"/>
</dbReference>
<dbReference type="InterPro" id="IPR004149">
    <property type="entry name" value="Znf_DNAligase_C4"/>
</dbReference>
<dbReference type="NCBIfam" id="TIGR00575">
    <property type="entry name" value="dnlj"/>
    <property type="match status" value="1"/>
</dbReference>
<dbReference type="NCBIfam" id="NF005932">
    <property type="entry name" value="PRK07956.1"/>
    <property type="match status" value="1"/>
</dbReference>
<dbReference type="PANTHER" id="PTHR23389">
    <property type="entry name" value="CHROMOSOME TRANSMISSION FIDELITY FACTOR 18"/>
    <property type="match status" value="1"/>
</dbReference>
<dbReference type="PANTHER" id="PTHR23389:SF9">
    <property type="entry name" value="DNA LIGASE"/>
    <property type="match status" value="1"/>
</dbReference>
<dbReference type="Pfam" id="PF00533">
    <property type="entry name" value="BRCT"/>
    <property type="match status" value="1"/>
</dbReference>
<dbReference type="Pfam" id="PF01653">
    <property type="entry name" value="DNA_ligase_aden"/>
    <property type="match status" value="1"/>
</dbReference>
<dbReference type="Pfam" id="PF03120">
    <property type="entry name" value="DNA_ligase_OB"/>
    <property type="match status" value="1"/>
</dbReference>
<dbReference type="Pfam" id="PF03119">
    <property type="entry name" value="DNA_ligase_ZBD"/>
    <property type="match status" value="1"/>
</dbReference>
<dbReference type="Pfam" id="PF12826">
    <property type="entry name" value="HHH_2"/>
    <property type="match status" value="1"/>
</dbReference>
<dbReference type="PIRSF" id="PIRSF001604">
    <property type="entry name" value="LigA"/>
    <property type="match status" value="1"/>
</dbReference>
<dbReference type="SMART" id="SM00292">
    <property type="entry name" value="BRCT"/>
    <property type="match status" value="1"/>
</dbReference>
<dbReference type="SMART" id="SM00532">
    <property type="entry name" value="LIGANc"/>
    <property type="match status" value="1"/>
</dbReference>
<dbReference type="SUPFAM" id="SSF52113">
    <property type="entry name" value="BRCT domain"/>
    <property type="match status" value="1"/>
</dbReference>
<dbReference type="SUPFAM" id="SSF56091">
    <property type="entry name" value="DNA ligase/mRNA capping enzyme, catalytic domain"/>
    <property type="match status" value="1"/>
</dbReference>
<dbReference type="SUPFAM" id="SSF50249">
    <property type="entry name" value="Nucleic acid-binding proteins"/>
    <property type="match status" value="1"/>
</dbReference>
<dbReference type="SUPFAM" id="SSF47781">
    <property type="entry name" value="RuvA domain 2-like"/>
    <property type="match status" value="1"/>
</dbReference>
<dbReference type="PROSITE" id="PS50172">
    <property type="entry name" value="BRCT"/>
    <property type="match status" value="1"/>
</dbReference>
<dbReference type="PROSITE" id="PS01055">
    <property type="entry name" value="DNA_LIGASE_N1"/>
    <property type="match status" value="1"/>
</dbReference>
<dbReference type="PROSITE" id="PS01056">
    <property type="entry name" value="DNA_LIGASE_N2"/>
    <property type="match status" value="1"/>
</dbReference>
<protein>
    <recommendedName>
        <fullName evidence="1">DNA ligase</fullName>
        <ecNumber evidence="1">6.5.1.2</ecNumber>
    </recommendedName>
    <alternativeName>
        <fullName evidence="1">Polydeoxyribonucleotide synthase [NAD(+)]</fullName>
    </alternativeName>
</protein>
<evidence type="ECO:0000255" key="1">
    <source>
        <dbReference type="HAMAP-Rule" id="MF_01588"/>
    </source>
</evidence>
<keyword id="KW-0227">DNA damage</keyword>
<keyword id="KW-0234">DNA repair</keyword>
<keyword id="KW-0235">DNA replication</keyword>
<keyword id="KW-0436">Ligase</keyword>
<keyword id="KW-0460">Magnesium</keyword>
<keyword id="KW-0464">Manganese</keyword>
<keyword id="KW-0479">Metal-binding</keyword>
<keyword id="KW-0520">NAD</keyword>
<keyword id="KW-1185">Reference proteome</keyword>
<keyword id="KW-0862">Zinc</keyword>
<sequence>MTTESQAAERLAFLAAEIARHNALYHGEDAPEISDADYDALMRENAALEAEYPHLVRADSPSKLVGAAPSGHLAKVAHAQPMLSLDNAFADEDVVDFVGRVRRYLSLGAEEPVALTAEPKIDGLSCSLRYEKGVLVLAATRGDGTTGEDVTANVRTIDDIPERLRGGDLLSSPPDVFEIRGEVYMAKADFAALNARLLAEAEDPAKARQFANPRNAAAGSLRQKDPGVTASRPLRFLAHGWGEVSALPADTQKGVMDAIAAWGLPVSDDFVRVDGAAQALSHYRAIEAKRADLPFDIDGVVYKVDRLDWQKRLGFVARAPRWAIAHKFPAEKAQTLLKDIDIQVGRTGKLTPVARLEPVTVGGVVVTNATLHNADEIGRLDVHPGDRVVVQRAGDVIPQIVENLSRDETRDPWPFPQTCPECGSAAEREPGEVDYRCTGGLICPAQRVERLRHFVSRHALDIEGLGLTHIESFFRDGLVQSPADIFRLTKDILLTRERWAEVSAGNLIAAIDAKRHPPLDRFLFALGIRHVGEVTARDLARRYRSWEGLKAMIDRTIEARDAAVQAIGETDEKFAARTAKELAAIVETPGVGPEVALALVDFFAEPHNADAVADLLSQLQPADVIHETRASEVSGKTVVFTGTLETMSRDEAKAQAEALGAKVAGSVSAKTDLVVAGPGAGSKLKKASDLGIAVTDEAGWAKIVADAQ</sequence>
<gene>
    <name evidence="1" type="primary">ligA</name>
    <name type="ordered locus">Swit_4727</name>
</gene>
<accession>A5VFJ8</accession>
<comment type="function">
    <text evidence="1">DNA ligase that catalyzes the formation of phosphodiester linkages between 5'-phosphoryl and 3'-hydroxyl groups in double-stranded DNA using NAD as a coenzyme and as the energy source for the reaction. It is essential for DNA replication and repair of damaged DNA.</text>
</comment>
<comment type="catalytic activity">
    <reaction evidence="1">
        <text>NAD(+) + (deoxyribonucleotide)n-3'-hydroxyl + 5'-phospho-(deoxyribonucleotide)m = (deoxyribonucleotide)n+m + AMP + beta-nicotinamide D-nucleotide.</text>
        <dbReference type="EC" id="6.5.1.2"/>
    </reaction>
</comment>
<comment type="cofactor">
    <cofactor evidence="1">
        <name>Mg(2+)</name>
        <dbReference type="ChEBI" id="CHEBI:18420"/>
    </cofactor>
    <cofactor evidence="1">
        <name>Mn(2+)</name>
        <dbReference type="ChEBI" id="CHEBI:29035"/>
    </cofactor>
</comment>
<comment type="similarity">
    <text evidence="1">Belongs to the NAD-dependent DNA ligase family. LigA subfamily.</text>
</comment>
<reference key="1">
    <citation type="journal article" date="2010" name="J. Bacteriol.">
        <title>Genome sequence of the dioxin-mineralizing bacterium Sphingomonas wittichii RW1.</title>
        <authorList>
            <person name="Miller T.R."/>
            <person name="Delcher A.L."/>
            <person name="Salzberg S.L."/>
            <person name="Saunders E."/>
            <person name="Detter J.C."/>
            <person name="Halden R.U."/>
        </authorList>
    </citation>
    <scope>NUCLEOTIDE SEQUENCE [LARGE SCALE GENOMIC DNA]</scope>
    <source>
        <strain>DSM 6014 / CCUG 31198 / JCM 15750 / NBRC 105917 / EY 4224 / RW1</strain>
    </source>
</reference>
<organism>
    <name type="scientific">Rhizorhabdus wittichii (strain DSM 6014 / CCUG 31198 / JCM 15750 / NBRC 105917 / EY 4224 / RW1)</name>
    <name type="common">Sphingomonas wittichii</name>
    <dbReference type="NCBI Taxonomy" id="392499"/>
    <lineage>
        <taxon>Bacteria</taxon>
        <taxon>Pseudomonadati</taxon>
        <taxon>Pseudomonadota</taxon>
        <taxon>Alphaproteobacteria</taxon>
        <taxon>Sphingomonadales</taxon>
        <taxon>Sphingomonadaceae</taxon>
        <taxon>Rhizorhabdus</taxon>
    </lineage>
</organism>
<name>DNLJ_RHIWR</name>
<feature type="chain" id="PRO_0000340385" description="DNA ligase">
    <location>
        <begin position="1"/>
        <end position="708"/>
    </location>
</feature>
<feature type="domain" description="BRCT" evidence="1">
    <location>
        <begin position="628"/>
        <end position="708"/>
    </location>
</feature>
<feature type="active site" description="N6-AMP-lysine intermediate" evidence="1">
    <location>
        <position position="120"/>
    </location>
</feature>
<feature type="binding site" evidence="1">
    <location>
        <begin position="35"/>
        <end position="39"/>
    </location>
    <ligand>
        <name>NAD(+)</name>
        <dbReference type="ChEBI" id="CHEBI:57540"/>
    </ligand>
</feature>
<feature type="binding site" evidence="1">
    <location>
        <begin position="84"/>
        <end position="85"/>
    </location>
    <ligand>
        <name>NAD(+)</name>
        <dbReference type="ChEBI" id="CHEBI:57540"/>
    </ligand>
</feature>
<feature type="binding site" evidence="1">
    <location>
        <position position="118"/>
    </location>
    <ligand>
        <name>NAD(+)</name>
        <dbReference type="ChEBI" id="CHEBI:57540"/>
    </ligand>
</feature>
<feature type="binding site" evidence="1">
    <location>
        <position position="141"/>
    </location>
    <ligand>
        <name>NAD(+)</name>
        <dbReference type="ChEBI" id="CHEBI:57540"/>
    </ligand>
</feature>
<feature type="binding site" evidence="1">
    <location>
        <position position="182"/>
    </location>
    <ligand>
        <name>NAD(+)</name>
        <dbReference type="ChEBI" id="CHEBI:57540"/>
    </ligand>
</feature>
<feature type="binding site" evidence="1">
    <location>
        <position position="303"/>
    </location>
    <ligand>
        <name>NAD(+)</name>
        <dbReference type="ChEBI" id="CHEBI:57540"/>
    </ligand>
</feature>
<feature type="binding site" evidence="1">
    <location>
        <position position="327"/>
    </location>
    <ligand>
        <name>NAD(+)</name>
        <dbReference type="ChEBI" id="CHEBI:57540"/>
    </ligand>
</feature>
<feature type="binding site" evidence="1">
    <location>
        <position position="419"/>
    </location>
    <ligand>
        <name>Zn(2+)</name>
        <dbReference type="ChEBI" id="CHEBI:29105"/>
    </ligand>
</feature>
<feature type="binding site" evidence="1">
    <location>
        <position position="422"/>
    </location>
    <ligand>
        <name>Zn(2+)</name>
        <dbReference type="ChEBI" id="CHEBI:29105"/>
    </ligand>
</feature>
<feature type="binding site" evidence="1">
    <location>
        <position position="437"/>
    </location>
    <ligand>
        <name>Zn(2+)</name>
        <dbReference type="ChEBI" id="CHEBI:29105"/>
    </ligand>
</feature>
<feature type="binding site" evidence="1">
    <location>
        <position position="443"/>
    </location>
    <ligand>
        <name>Zn(2+)</name>
        <dbReference type="ChEBI" id="CHEBI:29105"/>
    </ligand>
</feature>